<proteinExistence type="evidence at protein level"/>
<sequence>RWLGWQKFCWISCLFSSISSGLDPGEQAKVTTALDTAQFAINAINEEYIAQAKAIEEALKVSTQARSADLLRRQTELAKFGSKVGKALKAVQAASAIASFVFTFFMPSELDVITSLINERFNEVNAKLDRIDEKLDEMEKSIKADTAFNVFLSAWIKWEYKVRNGAKKLSDIRKAMGTKTQRIDQVKLAEEYVKYYETNNLDGNVLSLYRMAALPESITQRNIFDRFIAQFGCDITKLSELMILVQNIMTSAGQQKLTYYYFKGDQSRANSSFKDIQMYFFKIRQGFDDRVWHCRRNSLDYAKRDANKILKNMRGSSRESIVRAIFNELKVKYPWYTWAVAAVKSDRPRIRGLELRGSTYFRLEDRSDAKKVKGYFVVYEDTRSSASCSDITQAKTLLVFKKCDGCNSDYIYAADNILSKKRCGESTLERLVDFKQQCPVCHRWPYSITCYCANRVKQDSQNMGLYCISSQHH</sequence>
<keyword id="KW-0175">Coiled coil</keyword>
<keyword id="KW-0903">Direct protein sequencing</keyword>
<keyword id="KW-0964">Secreted</keyword>
<keyword id="KW-0732">Signal</keyword>
<evidence type="ECO:0000255" key="1"/>
<evidence type="ECO:0000269" key="2">
    <source>
    </source>
</evidence>
<evidence type="ECO:0000303" key="3">
    <source>
    </source>
</evidence>
<evidence type="ECO:0000305" key="4"/>
<evidence type="ECO:0000305" key="5">
    <source>
    </source>
</evidence>
<feature type="signal peptide" evidence="1">
    <location>
        <begin position="1" status="less than"/>
        <end position="21"/>
    </location>
</feature>
<feature type="chain" id="PRO_0000429497" description="Cephalotoxin-like protein" evidence="1">
    <location>
        <begin position="22"/>
        <end position="473" status="greater than"/>
    </location>
</feature>
<feature type="coiled-coil region" evidence="1">
    <location>
        <begin position="40"/>
        <end position="60"/>
    </location>
</feature>
<feature type="coiled-coil region" evidence="1">
    <location>
        <begin position="116"/>
        <end position="147"/>
    </location>
</feature>
<feature type="non-terminal residue" evidence="4">
    <location>
        <position position="1"/>
    </location>
</feature>
<feature type="non-terminal residue" evidence="4">
    <location>
        <position position="473"/>
    </location>
</feature>
<name>CTXL_ACRMI</name>
<protein>
    <recommendedName>
        <fullName evidence="3">Cephalotoxin-like protein</fullName>
    </recommendedName>
</protein>
<organism>
    <name type="scientific">Acropora millepora</name>
    <name type="common">Staghorn coral</name>
    <name type="synonym">Heteropora millepora</name>
    <dbReference type="NCBI Taxonomy" id="45264"/>
    <lineage>
        <taxon>Eukaryota</taxon>
        <taxon>Metazoa</taxon>
        <taxon>Cnidaria</taxon>
        <taxon>Anthozoa</taxon>
        <taxon>Hexacorallia</taxon>
        <taxon>Scleractinia</taxon>
        <taxon>Astrocoeniina</taxon>
        <taxon>Acroporidae</taxon>
        <taxon>Acropora</taxon>
    </lineage>
</organism>
<accession>B7W114</accession>
<comment type="subcellular location">
    <subcellularLocation>
        <location evidence="5">Secreted</location>
    </subcellularLocation>
</comment>
<comment type="tissue specificity">
    <text evidence="2">Component of the acid-insoluble and acid-soluble organic matrix of the aragonitic skeleton (at protein level).</text>
</comment>
<dbReference type="EMBL" id="JR986059">
    <property type="status" value="NOT_ANNOTATED_CDS"/>
    <property type="molecule type" value="mRNA"/>
</dbReference>
<dbReference type="SMR" id="B7W114"/>
<dbReference type="OrthoDB" id="4405280at2759"/>
<dbReference type="GO" id="GO:0005576">
    <property type="term" value="C:extracellular region"/>
    <property type="evidence" value="ECO:0007669"/>
    <property type="project" value="UniProtKB-SubCell"/>
</dbReference>
<dbReference type="InterPro" id="IPR039051">
    <property type="entry name" value="SE-CTX-like"/>
</dbReference>
<dbReference type="PANTHER" id="PTHR40472:SF7">
    <property type="entry name" value="PROTEIN RAPUNZEL"/>
    <property type="match status" value="1"/>
</dbReference>
<dbReference type="PANTHER" id="PTHR40472">
    <property type="entry name" value="RICIN B-TYPE LECTIN DOMAIN-CONTAINING PROTEIN"/>
    <property type="match status" value="1"/>
</dbReference>
<reference evidence="4" key="1">
    <citation type="journal article" date="2012" name="Mol. Ecol.">
        <title>Whole transcriptome analysis of the coral Acropora millepora reveals complex responses to CO(2)-driven acidification during the initiation of calcification.</title>
        <authorList>
            <person name="Moya A."/>
            <person name="Huisman L."/>
            <person name="Ball E.E."/>
            <person name="Hayward D.C."/>
            <person name="Grasso L.C."/>
            <person name="Chua C.M."/>
            <person name="Woo H.N."/>
            <person name="Gattuso J.P."/>
            <person name="Foret S."/>
            <person name="Miller D.J."/>
        </authorList>
    </citation>
    <scope>NUCLEOTIDE SEQUENCE [MRNA]</scope>
</reference>
<reference evidence="4" key="2">
    <citation type="journal article" date="2013" name="Mol. Biol. Evol.">
        <title>The skeletal proteome of the coral Acropora millepora: the evolution of calcification by co-option and domain shuffling.</title>
        <authorList>
            <person name="Ramos-Silva P."/>
            <person name="Kaandorp J."/>
            <person name="Huisman L."/>
            <person name="Marie B."/>
            <person name="Zanella-Cleon I."/>
            <person name="Guichard N."/>
            <person name="Miller D.J."/>
            <person name="Marin F."/>
        </authorList>
    </citation>
    <scope>PROTEIN SEQUENCE OF 29-54; 210-222; 226-238; 274-283 AND 323-331</scope>
    <scope>TISSUE SPECIFICITY</scope>
    <scope>IDENTIFICATION BY MASS SPECTROMETRY</scope>
</reference>